<gene>
    <name evidence="1" type="primary">queF</name>
    <name type="ordered locus">SG2878</name>
</gene>
<name>QUEF_SALG2</name>
<reference key="1">
    <citation type="journal article" date="2008" name="Genome Res.">
        <title>Comparative genome analysis of Salmonella enteritidis PT4 and Salmonella gallinarum 287/91 provides insights into evolutionary and host adaptation pathways.</title>
        <authorList>
            <person name="Thomson N.R."/>
            <person name="Clayton D.J."/>
            <person name="Windhorst D."/>
            <person name="Vernikos G."/>
            <person name="Davidson S."/>
            <person name="Churcher C."/>
            <person name="Quail M.A."/>
            <person name="Stevens M."/>
            <person name="Jones M.A."/>
            <person name="Watson M."/>
            <person name="Barron A."/>
            <person name="Layton A."/>
            <person name="Pickard D."/>
            <person name="Kingsley R.A."/>
            <person name="Bignell A."/>
            <person name="Clark L."/>
            <person name="Harris B."/>
            <person name="Ormond D."/>
            <person name="Abdellah Z."/>
            <person name="Brooks K."/>
            <person name="Cherevach I."/>
            <person name="Chillingworth T."/>
            <person name="Woodward J."/>
            <person name="Norberczak H."/>
            <person name="Lord A."/>
            <person name="Arrowsmith C."/>
            <person name="Jagels K."/>
            <person name="Moule S."/>
            <person name="Mungall K."/>
            <person name="Saunders M."/>
            <person name="Whitehead S."/>
            <person name="Chabalgoity J.A."/>
            <person name="Maskell D."/>
            <person name="Humphreys T."/>
            <person name="Roberts M."/>
            <person name="Barrow P.A."/>
            <person name="Dougan G."/>
            <person name="Parkhill J."/>
        </authorList>
    </citation>
    <scope>NUCLEOTIDE SEQUENCE [LARGE SCALE GENOMIC DNA]</scope>
    <source>
        <strain>287/91 / NCTC 13346</strain>
    </source>
</reference>
<organism>
    <name type="scientific">Salmonella gallinarum (strain 287/91 / NCTC 13346)</name>
    <dbReference type="NCBI Taxonomy" id="550538"/>
    <lineage>
        <taxon>Bacteria</taxon>
        <taxon>Pseudomonadati</taxon>
        <taxon>Pseudomonadota</taxon>
        <taxon>Gammaproteobacteria</taxon>
        <taxon>Enterobacterales</taxon>
        <taxon>Enterobacteriaceae</taxon>
        <taxon>Salmonella</taxon>
    </lineage>
</organism>
<comment type="function">
    <text evidence="1">Catalyzes the NADPH-dependent reduction of 7-cyano-7-deazaguanine (preQ0) to 7-aminomethyl-7-deazaguanine (preQ1).</text>
</comment>
<comment type="catalytic activity">
    <reaction evidence="1">
        <text>7-aminomethyl-7-carbaguanine + 2 NADP(+) = 7-cyano-7-deazaguanine + 2 NADPH + 3 H(+)</text>
        <dbReference type="Rhea" id="RHEA:13409"/>
        <dbReference type="ChEBI" id="CHEBI:15378"/>
        <dbReference type="ChEBI" id="CHEBI:45075"/>
        <dbReference type="ChEBI" id="CHEBI:57783"/>
        <dbReference type="ChEBI" id="CHEBI:58349"/>
        <dbReference type="ChEBI" id="CHEBI:58703"/>
        <dbReference type="EC" id="1.7.1.13"/>
    </reaction>
</comment>
<comment type="pathway">
    <text evidence="1">tRNA modification; tRNA-queuosine biosynthesis.</text>
</comment>
<comment type="subunit">
    <text evidence="1">Homodimer.</text>
</comment>
<comment type="subcellular location">
    <subcellularLocation>
        <location evidence="1">Cytoplasm</location>
    </subcellularLocation>
</comment>
<comment type="similarity">
    <text evidence="1">Belongs to the GTP cyclohydrolase I family. QueF type 2 subfamily.</text>
</comment>
<proteinExistence type="inferred from homology"/>
<keyword id="KW-0963">Cytoplasm</keyword>
<keyword id="KW-0521">NADP</keyword>
<keyword id="KW-0560">Oxidoreductase</keyword>
<keyword id="KW-0671">Queuosine biosynthesis</keyword>
<protein>
    <recommendedName>
        <fullName evidence="1">NADPH-dependent 7-cyano-7-deazaguanine reductase</fullName>
        <ecNumber evidence="1">1.7.1.13</ecNumber>
    </recommendedName>
    <alternativeName>
        <fullName evidence="1">7-cyano-7-carbaguanine reductase</fullName>
    </alternativeName>
    <alternativeName>
        <fullName evidence="1">NADPH-dependent nitrile oxidoreductase</fullName>
    </alternativeName>
    <alternativeName>
        <fullName evidence="1">PreQ(0) reductase</fullName>
    </alternativeName>
</protein>
<dbReference type="EC" id="1.7.1.13" evidence="1"/>
<dbReference type="EMBL" id="AM933173">
    <property type="protein sequence ID" value="CAR38684.1"/>
    <property type="molecule type" value="Genomic_DNA"/>
</dbReference>
<dbReference type="RefSeq" id="WP_000100463.1">
    <property type="nucleotide sequence ID" value="NC_011274.1"/>
</dbReference>
<dbReference type="SMR" id="B5RDU6"/>
<dbReference type="KEGG" id="seg:SG2878"/>
<dbReference type="HOGENOM" id="CLU_054738_0_0_6"/>
<dbReference type="UniPathway" id="UPA00392"/>
<dbReference type="Proteomes" id="UP000008321">
    <property type="component" value="Chromosome"/>
</dbReference>
<dbReference type="GO" id="GO:0005737">
    <property type="term" value="C:cytoplasm"/>
    <property type="evidence" value="ECO:0007669"/>
    <property type="project" value="UniProtKB-SubCell"/>
</dbReference>
<dbReference type="GO" id="GO:0033739">
    <property type="term" value="F:preQ1 synthase activity"/>
    <property type="evidence" value="ECO:0007669"/>
    <property type="project" value="UniProtKB-UniRule"/>
</dbReference>
<dbReference type="GO" id="GO:0008616">
    <property type="term" value="P:queuosine biosynthetic process"/>
    <property type="evidence" value="ECO:0007669"/>
    <property type="project" value="UniProtKB-UniRule"/>
</dbReference>
<dbReference type="GO" id="GO:0006400">
    <property type="term" value="P:tRNA modification"/>
    <property type="evidence" value="ECO:0007669"/>
    <property type="project" value="UniProtKB-UniRule"/>
</dbReference>
<dbReference type="FunFam" id="3.30.1130.10:FF:000004">
    <property type="entry name" value="NADPH-dependent 7-cyano-7-deazaguanine reductase"/>
    <property type="match status" value="1"/>
</dbReference>
<dbReference type="Gene3D" id="3.30.1130.10">
    <property type="match status" value="2"/>
</dbReference>
<dbReference type="HAMAP" id="MF_00817">
    <property type="entry name" value="QueF_type2"/>
    <property type="match status" value="1"/>
</dbReference>
<dbReference type="InterPro" id="IPR043133">
    <property type="entry name" value="GTP-CH-I_C/QueF"/>
</dbReference>
<dbReference type="InterPro" id="IPR050084">
    <property type="entry name" value="NADPH_dep_7-cyano-7-deazaG_red"/>
</dbReference>
<dbReference type="InterPro" id="IPR029500">
    <property type="entry name" value="QueF"/>
</dbReference>
<dbReference type="InterPro" id="IPR029139">
    <property type="entry name" value="QueF_N"/>
</dbReference>
<dbReference type="InterPro" id="IPR016428">
    <property type="entry name" value="QueF_type2"/>
</dbReference>
<dbReference type="NCBIfam" id="TIGR03138">
    <property type="entry name" value="QueF"/>
    <property type="match status" value="1"/>
</dbReference>
<dbReference type="PANTHER" id="PTHR34354">
    <property type="entry name" value="NADPH-DEPENDENT 7-CYANO-7-DEAZAGUANINE REDUCTASE"/>
    <property type="match status" value="1"/>
</dbReference>
<dbReference type="PANTHER" id="PTHR34354:SF1">
    <property type="entry name" value="NADPH-DEPENDENT 7-CYANO-7-DEAZAGUANINE REDUCTASE"/>
    <property type="match status" value="1"/>
</dbReference>
<dbReference type="Pfam" id="PF14489">
    <property type="entry name" value="QueF"/>
    <property type="match status" value="1"/>
</dbReference>
<dbReference type="Pfam" id="PF14819">
    <property type="entry name" value="QueF_N"/>
    <property type="match status" value="1"/>
</dbReference>
<dbReference type="PIRSF" id="PIRSF004750">
    <property type="entry name" value="Nitrile_oxidored_YqcD_prd"/>
    <property type="match status" value="1"/>
</dbReference>
<dbReference type="SUPFAM" id="SSF55620">
    <property type="entry name" value="Tetrahydrobiopterin biosynthesis enzymes-like"/>
    <property type="match status" value="1"/>
</dbReference>
<feature type="chain" id="PRO_1000213078" description="NADPH-dependent 7-cyano-7-deazaguanine reductase">
    <location>
        <begin position="1"/>
        <end position="282"/>
    </location>
</feature>
<feature type="active site" description="Thioimide intermediate" evidence="1">
    <location>
        <position position="190"/>
    </location>
</feature>
<feature type="active site" description="Proton donor" evidence="1">
    <location>
        <position position="197"/>
    </location>
</feature>
<feature type="binding site" evidence="1">
    <location>
        <begin position="88"/>
        <end position="90"/>
    </location>
    <ligand>
        <name>substrate</name>
    </ligand>
</feature>
<feature type="binding site" evidence="1">
    <location>
        <begin position="90"/>
        <end position="91"/>
    </location>
    <ligand>
        <name>NADPH</name>
        <dbReference type="ChEBI" id="CHEBI:57783"/>
    </ligand>
</feature>
<feature type="binding site" evidence="1">
    <location>
        <begin position="229"/>
        <end position="230"/>
    </location>
    <ligand>
        <name>substrate</name>
    </ligand>
</feature>
<feature type="binding site" evidence="1">
    <location>
        <begin position="258"/>
        <end position="259"/>
    </location>
    <ligand>
        <name>NADPH</name>
        <dbReference type="ChEBI" id="CHEBI:57783"/>
    </ligand>
</feature>
<evidence type="ECO:0000255" key="1">
    <source>
        <dbReference type="HAMAP-Rule" id="MF_00817"/>
    </source>
</evidence>
<accession>B5RDU6</accession>
<sequence length="282" mass="32645">MSSYENHQALDGLTLGKSTDYRDNYDASLLQGVPRSLNRDPLGLTADNLPFHGADIWTLYELSWLNSQGLPQVAVGHVELDYTSVNLIESKSFKLYLNSFNQTRFDTWETVRQTLERDLRACAQGNVSVRLHRLDELEGQPVAHFHGTCIDDQDISIDNYQFTTDYLQHAVSGEKQVEETLVSHLLKSNCLITHQPDWGSIQIQYRGRKIDREKLLRYLVSFRHHNEFHEQCVERIFNDILRFCQPETLSVYARYTRRGGLDINPWRSNTDFVPATGRLARQ</sequence>